<gene>
    <name type="primary">CPYA</name>
    <name type="ORF">CHGG_03138</name>
</gene>
<reference key="1">
    <citation type="journal article" date="2015" name="Genome Announc.">
        <title>Draft genome sequence of the cellulolytic fungus Chaetomium globosum.</title>
        <authorList>
            <person name="Cuomo C.A."/>
            <person name="Untereiner W.A."/>
            <person name="Ma L.-J."/>
            <person name="Grabherr M."/>
            <person name="Birren B.W."/>
        </authorList>
    </citation>
    <scope>NUCLEOTIDE SEQUENCE [LARGE SCALE GENOMIC DNA]</scope>
    <source>
        <strain>ATCC 6205 / CBS 148.51 / DSM 1962 / NBRC 6347 / NRRL 1970</strain>
    </source>
</reference>
<sequence>MRIAASTVLFGAASAASFQQQAQHVLSGGFGKAQEAMKPISDAFTDAAGRPFESFEDAFSGMTAETKALWEEIKLLVPDSAFKDLSWLSKPKPHHRRDDWNHVVKGADVQGMWVQDANGKSHRQVDGRLEEYNLRVKAVDPSKLNVDSVKQYSGYLDDEANDKHLFYWFFESRNDPKNDPVILWLNGGPGCSSLTGLFLELGPSSIDKTLKVVNNDFSWNNNASVIFLDQPVNVGYSYSGSSVSNTVAAGKDVYALLTLFFHQFPEYAKQDFHIAGESYAGHYIPVFASEILAHKNRNINLKSVLIGNGLTDGLTQYEHYRPMACGEGGYPAVLGEAECRSMDNALPRCQSLINNCYESGSVWSCVPASIYCNNAMIGPYQRTGRNVYDIRGPCEDSSNLCYSGLGYISDYLNQQSVMDALGVEVSSYDSCNFDINRNFLFQGDWMQPFHRLVPKILEEIPVLIYAGDADYICNWLGNRAWTEALEWPGKKDFNAAKVKDLKLSGAEKEYGKVKASGNFTFMQVYQAGHMVPMDQPENSLDFLNRWLNGEWFAK</sequence>
<protein>
    <recommendedName>
        <fullName>Carboxypeptidase Y homolog A</fullName>
        <ecNumber>3.4.16.5</ecNumber>
    </recommendedName>
</protein>
<dbReference type="EC" id="3.4.16.5"/>
<dbReference type="EMBL" id="CH408030">
    <property type="protein sequence ID" value="EAQ91203.1"/>
    <property type="molecule type" value="Genomic_DNA"/>
</dbReference>
<dbReference type="RefSeq" id="XP_001229654.1">
    <property type="nucleotide sequence ID" value="XM_001229653.1"/>
</dbReference>
<dbReference type="SMR" id="Q2H9G6"/>
<dbReference type="FunCoup" id="Q2H9G6">
    <property type="interactions" value="749"/>
</dbReference>
<dbReference type="STRING" id="306901.Q2H9G6"/>
<dbReference type="ESTHER" id="chagb-q2h9g6">
    <property type="family name" value="Carboxypeptidase_S10"/>
</dbReference>
<dbReference type="MEROPS" id="S10.001"/>
<dbReference type="GlyCosmos" id="Q2H9G6">
    <property type="glycosylation" value="2 sites, No reported glycans"/>
</dbReference>
<dbReference type="GeneID" id="4389770"/>
<dbReference type="VEuPathDB" id="FungiDB:CHGG_03138"/>
<dbReference type="eggNOG" id="KOG1282">
    <property type="taxonomic scope" value="Eukaryota"/>
</dbReference>
<dbReference type="HOGENOM" id="CLU_008523_10_4_1"/>
<dbReference type="InParanoid" id="Q2H9G6"/>
<dbReference type="OMA" id="GDWMKPF"/>
<dbReference type="OrthoDB" id="443318at2759"/>
<dbReference type="Proteomes" id="UP000001056">
    <property type="component" value="Unassembled WGS sequence"/>
</dbReference>
<dbReference type="GO" id="GO:0000324">
    <property type="term" value="C:fungal-type vacuole"/>
    <property type="evidence" value="ECO:0007669"/>
    <property type="project" value="TreeGrafter"/>
</dbReference>
<dbReference type="GO" id="GO:0004185">
    <property type="term" value="F:serine-type carboxypeptidase activity"/>
    <property type="evidence" value="ECO:0007669"/>
    <property type="project" value="UniProtKB-EC"/>
</dbReference>
<dbReference type="GO" id="GO:0006508">
    <property type="term" value="P:proteolysis"/>
    <property type="evidence" value="ECO:0007669"/>
    <property type="project" value="UniProtKB-KW"/>
</dbReference>
<dbReference type="FunFam" id="1.10.287.410:FF:000001">
    <property type="entry name" value="Carboxypeptidase Y"/>
    <property type="match status" value="1"/>
</dbReference>
<dbReference type="Gene3D" id="1.10.287.410">
    <property type="match status" value="1"/>
</dbReference>
<dbReference type="Gene3D" id="3.40.50.1820">
    <property type="entry name" value="alpha/beta hydrolase"/>
    <property type="match status" value="1"/>
</dbReference>
<dbReference type="InterPro" id="IPR029058">
    <property type="entry name" value="AB_hydrolase_fold"/>
</dbReference>
<dbReference type="InterPro" id="IPR001563">
    <property type="entry name" value="Peptidase_S10"/>
</dbReference>
<dbReference type="InterPro" id="IPR008442">
    <property type="entry name" value="Propeptide_carboxypepY"/>
</dbReference>
<dbReference type="InterPro" id="IPR018202">
    <property type="entry name" value="Ser_caboxypep_ser_AS"/>
</dbReference>
<dbReference type="PANTHER" id="PTHR11802:SF113">
    <property type="entry name" value="SERINE CARBOXYPEPTIDASE CTSA-4.1"/>
    <property type="match status" value="1"/>
</dbReference>
<dbReference type="PANTHER" id="PTHR11802">
    <property type="entry name" value="SERINE PROTEASE FAMILY S10 SERINE CARBOXYPEPTIDASE"/>
    <property type="match status" value="1"/>
</dbReference>
<dbReference type="Pfam" id="PF05388">
    <property type="entry name" value="Carbpep_Y_N"/>
    <property type="match status" value="1"/>
</dbReference>
<dbReference type="Pfam" id="PF00450">
    <property type="entry name" value="Peptidase_S10"/>
    <property type="match status" value="1"/>
</dbReference>
<dbReference type="PRINTS" id="PR00724">
    <property type="entry name" value="CRBOXYPTASEC"/>
</dbReference>
<dbReference type="SUPFAM" id="SSF53474">
    <property type="entry name" value="alpha/beta-Hydrolases"/>
    <property type="match status" value="1"/>
</dbReference>
<dbReference type="PROSITE" id="PS00131">
    <property type="entry name" value="CARBOXYPEPT_SER_SER"/>
    <property type="match status" value="1"/>
</dbReference>
<evidence type="ECO:0000250" key="1"/>
<evidence type="ECO:0000255" key="2"/>
<evidence type="ECO:0000255" key="3">
    <source>
        <dbReference type="PROSITE-ProRule" id="PRU10074"/>
    </source>
</evidence>
<evidence type="ECO:0000305" key="4"/>
<comment type="function">
    <text evidence="1">Vacuolar carboxypeptidase involved in degradation of small peptides. Digests preferentially peptides containing an aliphatic or hydrophobic residue in P1' position, as well as methionine, leucine or phenylalanine in P1 position of ester substrate (By similarity).</text>
</comment>
<comment type="catalytic activity">
    <reaction evidence="3">
        <text>Release of a C-terminal amino acid with broad specificity.</text>
        <dbReference type="EC" id="3.4.16.5"/>
    </reaction>
</comment>
<comment type="subcellular location">
    <subcellularLocation>
        <location evidence="1">Vacuole</location>
    </subcellularLocation>
</comment>
<comment type="similarity">
    <text evidence="4">Belongs to the peptidase S10 family.</text>
</comment>
<name>CBPYA_CHAGB</name>
<accession>Q2H9G6</accession>
<feature type="signal peptide" evidence="2">
    <location>
        <begin position="1"/>
        <end position="17"/>
    </location>
</feature>
<feature type="propeptide" id="PRO_0000407443" evidence="1">
    <location>
        <begin position="18"/>
        <end position="137"/>
    </location>
</feature>
<feature type="chain" id="PRO_0000407444" description="Carboxypeptidase Y homolog A">
    <location>
        <begin position="138"/>
        <end position="554"/>
    </location>
</feature>
<feature type="active site" evidence="3">
    <location>
        <position position="278"/>
    </location>
</feature>
<feature type="active site" evidence="3">
    <location>
        <position position="470"/>
    </location>
</feature>
<feature type="active site" evidence="3">
    <location>
        <position position="529"/>
    </location>
</feature>
<feature type="glycosylation site" description="N-linked (GlcNAc...) asparagine" evidence="2">
    <location>
        <position position="222"/>
    </location>
</feature>
<feature type="glycosylation site" description="N-linked (GlcNAc...) asparagine" evidence="2">
    <location>
        <position position="518"/>
    </location>
</feature>
<feature type="disulfide bond" evidence="1">
    <location>
        <begin position="191"/>
        <end position="431"/>
    </location>
</feature>
<feature type="disulfide bond" evidence="1">
    <location>
        <begin position="325"/>
        <end position="339"/>
    </location>
</feature>
<feature type="disulfide bond" evidence="1">
    <location>
        <begin position="349"/>
        <end position="372"/>
    </location>
</feature>
<feature type="disulfide bond" evidence="1">
    <location>
        <begin position="356"/>
        <end position="365"/>
    </location>
</feature>
<feature type="disulfide bond" evidence="1">
    <location>
        <begin position="394"/>
        <end position="401"/>
    </location>
</feature>
<keyword id="KW-0121">Carboxypeptidase</keyword>
<keyword id="KW-1015">Disulfide bond</keyword>
<keyword id="KW-0325">Glycoprotein</keyword>
<keyword id="KW-0378">Hydrolase</keyword>
<keyword id="KW-0645">Protease</keyword>
<keyword id="KW-1185">Reference proteome</keyword>
<keyword id="KW-0732">Signal</keyword>
<keyword id="KW-0926">Vacuole</keyword>
<keyword id="KW-0865">Zymogen</keyword>
<organism>
    <name type="scientific">Chaetomium globosum (strain ATCC 6205 / CBS 148.51 / DSM 1962 / NBRC 6347 / NRRL 1970)</name>
    <name type="common">Soil fungus</name>
    <dbReference type="NCBI Taxonomy" id="306901"/>
    <lineage>
        <taxon>Eukaryota</taxon>
        <taxon>Fungi</taxon>
        <taxon>Dikarya</taxon>
        <taxon>Ascomycota</taxon>
        <taxon>Pezizomycotina</taxon>
        <taxon>Sordariomycetes</taxon>
        <taxon>Sordariomycetidae</taxon>
        <taxon>Sordariales</taxon>
        <taxon>Chaetomiaceae</taxon>
        <taxon>Chaetomium</taxon>
    </lineage>
</organism>
<proteinExistence type="inferred from homology"/>